<feature type="chain" id="PRO_1000065256" description="UPF0294 protein YafD">
    <location>
        <begin position="1"/>
        <end position="266"/>
    </location>
</feature>
<comment type="subcellular location">
    <subcellularLocation>
        <location evidence="1">Cytoplasm</location>
    </subcellularLocation>
</comment>
<comment type="similarity">
    <text evidence="1">Belongs to the UPF0294 family.</text>
</comment>
<sequence length="266" mass="29992">MRKNTYAMRYVAGQPAERILPPGSFASIGQALPPGEPLSTEERIRILVWNIYKQQRAEWLSVLKNYGKDAHLVLLQEAQTTPELVQFATANYLAADQVPAFVLPQHPSGVMTLSAAHPVYCCPLREREPILRLAKSALVTVYPLPDTRLLMVVNIHAVNFSLGVDVYSKQLLPIGDQIAHHSGPVIMAGDFNAWSRRRMNALYRFAREMSLRQVRFTDDQRRRAFGRPLDFVFYRGLNVSEASVLVTRASDHNPLLVEFSPGKPDK</sequence>
<reference key="1">
    <citation type="journal article" date="2006" name="BMC Genomics">
        <title>Complete genome sequence of Shigella flexneri 5b and comparison with Shigella flexneri 2a.</title>
        <authorList>
            <person name="Nie H."/>
            <person name="Yang F."/>
            <person name="Zhang X."/>
            <person name="Yang J."/>
            <person name="Chen L."/>
            <person name="Wang J."/>
            <person name="Xiong Z."/>
            <person name="Peng J."/>
            <person name="Sun L."/>
            <person name="Dong J."/>
            <person name="Xue Y."/>
            <person name="Xu X."/>
            <person name="Chen S."/>
            <person name="Yao Z."/>
            <person name="Shen Y."/>
            <person name="Jin Q."/>
        </authorList>
    </citation>
    <scope>NUCLEOTIDE SEQUENCE [LARGE SCALE GENOMIC DNA]</scope>
    <source>
        <strain>8401</strain>
    </source>
</reference>
<keyword id="KW-0963">Cytoplasm</keyword>
<name>YAFD_SHIF8</name>
<organism>
    <name type="scientific">Shigella flexneri serotype 5b (strain 8401)</name>
    <dbReference type="NCBI Taxonomy" id="373384"/>
    <lineage>
        <taxon>Bacteria</taxon>
        <taxon>Pseudomonadati</taxon>
        <taxon>Pseudomonadota</taxon>
        <taxon>Gammaproteobacteria</taxon>
        <taxon>Enterobacterales</taxon>
        <taxon>Enterobacteriaceae</taxon>
        <taxon>Shigella</taxon>
    </lineage>
</organism>
<accession>Q0T805</accession>
<proteinExistence type="inferred from homology"/>
<dbReference type="EMBL" id="CP000266">
    <property type="protein sequence ID" value="ABF02471.1"/>
    <property type="molecule type" value="Genomic_DNA"/>
</dbReference>
<dbReference type="RefSeq" id="WP_001230983.1">
    <property type="nucleotide sequence ID" value="NC_008258.1"/>
</dbReference>
<dbReference type="SMR" id="Q0T805"/>
<dbReference type="KEGG" id="sfv:SFV_0193"/>
<dbReference type="HOGENOM" id="CLU_083563_0_0_6"/>
<dbReference type="Proteomes" id="UP000000659">
    <property type="component" value="Chromosome"/>
</dbReference>
<dbReference type="GO" id="GO:0005737">
    <property type="term" value="C:cytoplasm"/>
    <property type="evidence" value="ECO:0007669"/>
    <property type="project" value="UniProtKB-SubCell"/>
</dbReference>
<dbReference type="GO" id="GO:0003824">
    <property type="term" value="F:catalytic activity"/>
    <property type="evidence" value="ECO:0007669"/>
    <property type="project" value="InterPro"/>
</dbReference>
<dbReference type="Gene3D" id="3.60.10.10">
    <property type="entry name" value="Endonuclease/exonuclease/phosphatase"/>
    <property type="match status" value="1"/>
</dbReference>
<dbReference type="HAMAP" id="MF_01119">
    <property type="entry name" value="UPF0294"/>
    <property type="match status" value="1"/>
</dbReference>
<dbReference type="InterPro" id="IPR036691">
    <property type="entry name" value="Endo/exonu/phosph_ase_sf"/>
</dbReference>
<dbReference type="InterPro" id="IPR005135">
    <property type="entry name" value="Endo/exonuclease/phosphatase"/>
</dbReference>
<dbReference type="InterPro" id="IPR022958">
    <property type="entry name" value="UPF0294"/>
</dbReference>
<dbReference type="NCBIfam" id="NF003839">
    <property type="entry name" value="PRK05421.1-1"/>
    <property type="match status" value="1"/>
</dbReference>
<dbReference type="NCBIfam" id="NF003840">
    <property type="entry name" value="PRK05421.1-2"/>
    <property type="match status" value="1"/>
</dbReference>
<dbReference type="NCBIfam" id="NF003841">
    <property type="entry name" value="PRK05421.1-3"/>
    <property type="match status" value="1"/>
</dbReference>
<dbReference type="NCBIfam" id="NF003842">
    <property type="entry name" value="PRK05421.1-4"/>
    <property type="match status" value="1"/>
</dbReference>
<dbReference type="Pfam" id="PF03372">
    <property type="entry name" value="Exo_endo_phos"/>
    <property type="match status" value="1"/>
</dbReference>
<dbReference type="SUPFAM" id="SSF56219">
    <property type="entry name" value="DNase I-like"/>
    <property type="match status" value="1"/>
</dbReference>
<protein>
    <recommendedName>
        <fullName evidence="1">UPF0294 protein YafD</fullName>
    </recommendedName>
</protein>
<evidence type="ECO:0000255" key="1">
    <source>
        <dbReference type="HAMAP-Rule" id="MF_01119"/>
    </source>
</evidence>
<gene>
    <name evidence="1" type="primary">yafD</name>
    <name type="ordered locus">SFV_0193</name>
</gene>